<reference key="1">
    <citation type="journal article" date="2004" name="J. Cell Biol.">
        <title>Kazrin, a novel periplakin-interacting protein associated with desmosomes and the keratinocyte plasma membrane.</title>
        <authorList>
            <person name="Groot K.R."/>
            <person name="Sevilla L.M."/>
            <person name="Nishi K."/>
            <person name="DiColandrea T."/>
            <person name="Watt F.M."/>
        </authorList>
    </citation>
    <scope>NUCLEOTIDE SEQUENCE [MRNA] (ISOFORMS 2; 3 AND 4)</scope>
    <scope>FUNCTION</scope>
    <scope>SUBCELLULAR LOCATION</scope>
    <scope>TISSUE SPECIFICITY</scope>
    <scope>INTERACTION WITH PPL</scope>
    <source>
        <tissue>Spinal ganglion</tissue>
    </source>
</reference>
<reference key="2">
    <citation type="journal article" date="1999" name="DNA Res.">
        <title>Prediction of the coding sequences of unidentified human genes. XIV. The complete sequences of 100 new cDNA clones from brain which code for large proteins in vitro.</title>
        <authorList>
            <person name="Kikuno R."/>
            <person name="Nagase T."/>
            <person name="Ishikawa K."/>
            <person name="Hirosawa M."/>
            <person name="Miyajima N."/>
            <person name="Tanaka A."/>
            <person name="Kotani H."/>
            <person name="Nomura N."/>
            <person name="Ohara O."/>
        </authorList>
    </citation>
    <scope>NUCLEOTIDE SEQUENCE [LARGE SCALE MRNA] (ISOFORM 5)</scope>
    <source>
        <tissue>Brain</tissue>
    </source>
</reference>
<reference key="3">
    <citation type="journal article" date="2006" name="Nature">
        <title>The DNA sequence and biological annotation of human chromosome 1.</title>
        <authorList>
            <person name="Gregory S.G."/>
            <person name="Barlow K.F."/>
            <person name="McLay K.E."/>
            <person name="Kaul R."/>
            <person name="Swarbreck D."/>
            <person name="Dunham A."/>
            <person name="Scott C.E."/>
            <person name="Howe K.L."/>
            <person name="Woodfine K."/>
            <person name="Spencer C.C.A."/>
            <person name="Jones M.C."/>
            <person name="Gillson C."/>
            <person name="Searle S."/>
            <person name="Zhou Y."/>
            <person name="Kokocinski F."/>
            <person name="McDonald L."/>
            <person name="Evans R."/>
            <person name="Phillips K."/>
            <person name="Atkinson A."/>
            <person name="Cooper R."/>
            <person name="Jones C."/>
            <person name="Hall R.E."/>
            <person name="Andrews T.D."/>
            <person name="Lloyd C."/>
            <person name="Ainscough R."/>
            <person name="Almeida J.P."/>
            <person name="Ambrose K.D."/>
            <person name="Anderson F."/>
            <person name="Andrew R.W."/>
            <person name="Ashwell R.I.S."/>
            <person name="Aubin K."/>
            <person name="Babbage A.K."/>
            <person name="Bagguley C.L."/>
            <person name="Bailey J."/>
            <person name="Beasley H."/>
            <person name="Bethel G."/>
            <person name="Bird C.P."/>
            <person name="Bray-Allen S."/>
            <person name="Brown J.Y."/>
            <person name="Brown A.J."/>
            <person name="Buckley D."/>
            <person name="Burton J."/>
            <person name="Bye J."/>
            <person name="Carder C."/>
            <person name="Chapman J.C."/>
            <person name="Clark S.Y."/>
            <person name="Clarke G."/>
            <person name="Clee C."/>
            <person name="Cobley V."/>
            <person name="Collier R.E."/>
            <person name="Corby N."/>
            <person name="Coville G.J."/>
            <person name="Davies J."/>
            <person name="Deadman R."/>
            <person name="Dunn M."/>
            <person name="Earthrowl M."/>
            <person name="Ellington A.G."/>
            <person name="Errington H."/>
            <person name="Frankish A."/>
            <person name="Frankland J."/>
            <person name="French L."/>
            <person name="Garner P."/>
            <person name="Garnett J."/>
            <person name="Gay L."/>
            <person name="Ghori M.R.J."/>
            <person name="Gibson R."/>
            <person name="Gilby L.M."/>
            <person name="Gillett W."/>
            <person name="Glithero R.J."/>
            <person name="Grafham D.V."/>
            <person name="Griffiths C."/>
            <person name="Griffiths-Jones S."/>
            <person name="Grocock R."/>
            <person name="Hammond S."/>
            <person name="Harrison E.S.I."/>
            <person name="Hart E."/>
            <person name="Haugen E."/>
            <person name="Heath P.D."/>
            <person name="Holmes S."/>
            <person name="Holt K."/>
            <person name="Howden P.J."/>
            <person name="Hunt A.R."/>
            <person name="Hunt S.E."/>
            <person name="Hunter G."/>
            <person name="Isherwood J."/>
            <person name="James R."/>
            <person name="Johnson C."/>
            <person name="Johnson D."/>
            <person name="Joy A."/>
            <person name="Kay M."/>
            <person name="Kershaw J.K."/>
            <person name="Kibukawa M."/>
            <person name="Kimberley A.M."/>
            <person name="King A."/>
            <person name="Knights A.J."/>
            <person name="Lad H."/>
            <person name="Laird G."/>
            <person name="Lawlor S."/>
            <person name="Leongamornlert D.A."/>
            <person name="Lloyd D.M."/>
            <person name="Loveland J."/>
            <person name="Lovell J."/>
            <person name="Lush M.J."/>
            <person name="Lyne R."/>
            <person name="Martin S."/>
            <person name="Mashreghi-Mohammadi M."/>
            <person name="Matthews L."/>
            <person name="Matthews N.S.W."/>
            <person name="McLaren S."/>
            <person name="Milne S."/>
            <person name="Mistry S."/>
            <person name="Moore M.J.F."/>
            <person name="Nickerson T."/>
            <person name="O'Dell C.N."/>
            <person name="Oliver K."/>
            <person name="Palmeiri A."/>
            <person name="Palmer S.A."/>
            <person name="Parker A."/>
            <person name="Patel D."/>
            <person name="Pearce A.V."/>
            <person name="Peck A.I."/>
            <person name="Pelan S."/>
            <person name="Phelps K."/>
            <person name="Phillimore B.J."/>
            <person name="Plumb R."/>
            <person name="Rajan J."/>
            <person name="Raymond C."/>
            <person name="Rouse G."/>
            <person name="Saenphimmachak C."/>
            <person name="Sehra H.K."/>
            <person name="Sheridan E."/>
            <person name="Shownkeen R."/>
            <person name="Sims S."/>
            <person name="Skuce C.D."/>
            <person name="Smith M."/>
            <person name="Steward C."/>
            <person name="Subramanian S."/>
            <person name="Sycamore N."/>
            <person name="Tracey A."/>
            <person name="Tromans A."/>
            <person name="Van Helmond Z."/>
            <person name="Wall M."/>
            <person name="Wallis J.M."/>
            <person name="White S."/>
            <person name="Whitehead S.L."/>
            <person name="Wilkinson J.E."/>
            <person name="Willey D.L."/>
            <person name="Williams H."/>
            <person name="Wilming L."/>
            <person name="Wray P.W."/>
            <person name="Wu Z."/>
            <person name="Coulson A."/>
            <person name="Vaudin M."/>
            <person name="Sulston J.E."/>
            <person name="Durbin R.M."/>
            <person name="Hubbard T."/>
            <person name="Wooster R."/>
            <person name="Dunham I."/>
            <person name="Carter N.P."/>
            <person name="McVean G."/>
            <person name="Ross M.T."/>
            <person name="Harrow J."/>
            <person name="Olson M.V."/>
            <person name="Beck S."/>
            <person name="Rogers J."/>
            <person name="Bentley D.R."/>
        </authorList>
    </citation>
    <scope>NUCLEOTIDE SEQUENCE [LARGE SCALE GENOMIC DNA]</scope>
</reference>
<reference key="4">
    <citation type="submission" date="2005-07" db="EMBL/GenBank/DDBJ databases">
        <authorList>
            <person name="Mural R.J."/>
            <person name="Istrail S."/>
            <person name="Sutton G.G."/>
            <person name="Florea L."/>
            <person name="Halpern A.L."/>
            <person name="Mobarry C.M."/>
            <person name="Lippert R."/>
            <person name="Walenz B."/>
            <person name="Shatkay H."/>
            <person name="Dew I."/>
            <person name="Miller J.R."/>
            <person name="Flanigan M.J."/>
            <person name="Edwards N.J."/>
            <person name="Bolanos R."/>
            <person name="Fasulo D."/>
            <person name="Halldorsson B.V."/>
            <person name="Hannenhalli S."/>
            <person name="Turner R."/>
            <person name="Yooseph S."/>
            <person name="Lu F."/>
            <person name="Nusskern D.R."/>
            <person name="Shue B.C."/>
            <person name="Zheng X.H."/>
            <person name="Zhong F."/>
            <person name="Delcher A.L."/>
            <person name="Huson D.H."/>
            <person name="Kravitz S.A."/>
            <person name="Mouchard L."/>
            <person name="Reinert K."/>
            <person name="Remington K.A."/>
            <person name="Clark A.G."/>
            <person name="Waterman M.S."/>
            <person name="Eichler E.E."/>
            <person name="Adams M.D."/>
            <person name="Hunkapiller M.W."/>
            <person name="Myers E.W."/>
            <person name="Venter J.C."/>
        </authorList>
    </citation>
    <scope>NUCLEOTIDE SEQUENCE [LARGE SCALE GENOMIC DNA]</scope>
</reference>
<reference key="5">
    <citation type="journal article" date="2004" name="Genome Res.">
        <title>The status, quality, and expansion of the NIH full-length cDNA project: the Mammalian Gene Collection (MGC).</title>
        <authorList>
            <consortium name="The MGC Project Team"/>
        </authorList>
    </citation>
    <scope>NUCLEOTIDE SEQUENCE [LARGE SCALE MRNA] (ISOFORMS 1 AND 3)</scope>
    <source>
        <tissue>Uterus</tissue>
    </source>
</reference>
<reference key="6">
    <citation type="journal article" date="1998" name="Nat. Biotechnol.">
        <title>Selection system for genes encoding nuclear-targeted proteins.</title>
        <authorList>
            <person name="Ueki N."/>
            <person name="Oda T."/>
            <person name="Kondo M."/>
            <person name="Yano K."/>
            <person name="Noguchi T."/>
            <person name="Muramatsu M.-A."/>
        </authorList>
    </citation>
    <scope>NUCLEOTIDE SEQUENCE [LARGE SCALE MRNA] OF 109-775 (ISOFORM 4)</scope>
    <scope>SUBCELLULAR LOCATION</scope>
    <source>
        <tissue>Fetal brain</tissue>
    </source>
</reference>
<reference key="7">
    <citation type="journal article" date="2004" name="Nat. Genet.">
        <title>Complete sequencing and characterization of 21,243 full-length human cDNAs.</title>
        <authorList>
            <person name="Ota T."/>
            <person name="Suzuki Y."/>
            <person name="Nishikawa T."/>
            <person name="Otsuki T."/>
            <person name="Sugiyama T."/>
            <person name="Irie R."/>
            <person name="Wakamatsu A."/>
            <person name="Hayashi K."/>
            <person name="Sato H."/>
            <person name="Nagai K."/>
            <person name="Kimura K."/>
            <person name="Makita H."/>
            <person name="Sekine M."/>
            <person name="Obayashi M."/>
            <person name="Nishi T."/>
            <person name="Shibahara T."/>
            <person name="Tanaka T."/>
            <person name="Ishii S."/>
            <person name="Yamamoto J."/>
            <person name="Saito K."/>
            <person name="Kawai Y."/>
            <person name="Isono Y."/>
            <person name="Nakamura Y."/>
            <person name="Nagahari K."/>
            <person name="Murakami K."/>
            <person name="Yasuda T."/>
            <person name="Iwayanagi T."/>
            <person name="Wagatsuma M."/>
            <person name="Shiratori A."/>
            <person name="Sudo H."/>
            <person name="Hosoiri T."/>
            <person name="Kaku Y."/>
            <person name="Kodaira H."/>
            <person name="Kondo H."/>
            <person name="Sugawara M."/>
            <person name="Takahashi M."/>
            <person name="Kanda K."/>
            <person name="Yokoi T."/>
            <person name="Furuya T."/>
            <person name="Kikkawa E."/>
            <person name="Omura Y."/>
            <person name="Abe K."/>
            <person name="Kamihara K."/>
            <person name="Katsuta N."/>
            <person name="Sato K."/>
            <person name="Tanikawa M."/>
            <person name="Yamazaki M."/>
            <person name="Ninomiya K."/>
            <person name="Ishibashi T."/>
            <person name="Yamashita H."/>
            <person name="Murakawa K."/>
            <person name="Fujimori K."/>
            <person name="Tanai H."/>
            <person name="Kimata M."/>
            <person name="Watanabe M."/>
            <person name="Hiraoka S."/>
            <person name="Chiba Y."/>
            <person name="Ishida S."/>
            <person name="Ono Y."/>
            <person name="Takiguchi S."/>
            <person name="Watanabe S."/>
            <person name="Yosida M."/>
            <person name="Hotuta T."/>
            <person name="Kusano J."/>
            <person name="Kanehori K."/>
            <person name="Takahashi-Fujii A."/>
            <person name="Hara H."/>
            <person name="Tanase T.-O."/>
            <person name="Nomura Y."/>
            <person name="Togiya S."/>
            <person name="Komai F."/>
            <person name="Hara R."/>
            <person name="Takeuchi K."/>
            <person name="Arita M."/>
            <person name="Imose N."/>
            <person name="Musashino K."/>
            <person name="Yuuki H."/>
            <person name="Oshima A."/>
            <person name="Sasaki N."/>
            <person name="Aotsuka S."/>
            <person name="Yoshikawa Y."/>
            <person name="Matsunawa H."/>
            <person name="Ichihara T."/>
            <person name="Shiohata N."/>
            <person name="Sano S."/>
            <person name="Moriya S."/>
            <person name="Momiyama H."/>
            <person name="Satoh N."/>
            <person name="Takami S."/>
            <person name="Terashima Y."/>
            <person name="Suzuki O."/>
            <person name="Nakagawa S."/>
            <person name="Senoh A."/>
            <person name="Mizoguchi H."/>
            <person name="Goto Y."/>
            <person name="Shimizu F."/>
            <person name="Wakebe H."/>
            <person name="Hishigaki H."/>
            <person name="Watanabe T."/>
            <person name="Sugiyama A."/>
            <person name="Takemoto M."/>
            <person name="Kawakami B."/>
            <person name="Yamazaki M."/>
            <person name="Watanabe K."/>
            <person name="Kumagai A."/>
            <person name="Itakura S."/>
            <person name="Fukuzumi Y."/>
            <person name="Fujimori Y."/>
            <person name="Komiyama M."/>
            <person name="Tashiro H."/>
            <person name="Tanigami A."/>
            <person name="Fujiwara T."/>
            <person name="Ono T."/>
            <person name="Yamada K."/>
            <person name="Fujii Y."/>
            <person name="Ozaki K."/>
            <person name="Hirao M."/>
            <person name="Ohmori Y."/>
            <person name="Kawabata A."/>
            <person name="Hikiji T."/>
            <person name="Kobatake N."/>
            <person name="Inagaki H."/>
            <person name="Ikema Y."/>
            <person name="Okamoto S."/>
            <person name="Okitani R."/>
            <person name="Kawakami T."/>
            <person name="Noguchi S."/>
            <person name="Itoh T."/>
            <person name="Shigeta K."/>
            <person name="Senba T."/>
            <person name="Matsumura K."/>
            <person name="Nakajima Y."/>
            <person name="Mizuno T."/>
            <person name="Morinaga M."/>
            <person name="Sasaki M."/>
            <person name="Togashi T."/>
            <person name="Oyama M."/>
            <person name="Hata H."/>
            <person name="Watanabe M."/>
            <person name="Komatsu T."/>
            <person name="Mizushima-Sugano J."/>
            <person name="Satoh T."/>
            <person name="Shirai Y."/>
            <person name="Takahashi Y."/>
            <person name="Nakagawa K."/>
            <person name="Okumura K."/>
            <person name="Nagase T."/>
            <person name="Nomura N."/>
            <person name="Kikuchi H."/>
            <person name="Masuho Y."/>
            <person name="Yamashita R."/>
            <person name="Nakai K."/>
            <person name="Yada T."/>
            <person name="Nakamura Y."/>
            <person name="Ohara O."/>
            <person name="Isogai T."/>
            <person name="Sugano S."/>
        </authorList>
    </citation>
    <scope>NUCLEOTIDE SEQUENCE [LARGE SCALE MRNA] OF 536-775 (ISOFORM 1)</scope>
    <scope>VARIANT THR-706</scope>
    <source>
        <tissue>Testis</tissue>
    </source>
</reference>
<reference key="8">
    <citation type="journal article" date="2013" name="J. Proteome Res.">
        <title>Toward a comprehensive characterization of a human cancer cell phosphoproteome.</title>
        <authorList>
            <person name="Zhou H."/>
            <person name="Di Palma S."/>
            <person name="Preisinger C."/>
            <person name="Peng M."/>
            <person name="Polat A.N."/>
            <person name="Heck A.J."/>
            <person name="Mohammed S."/>
        </authorList>
    </citation>
    <scope>PHOSPHORYLATION [LARGE SCALE ANALYSIS] AT SER-352 AND SER-387</scope>
    <scope>IDENTIFICATION BY MASS SPECTROMETRY [LARGE SCALE ANALYSIS]</scope>
    <source>
        <tissue>Erythroleukemia</tissue>
    </source>
</reference>
<dbReference type="EMBL" id="AY505119">
    <property type="protein sequence ID" value="AAS86434.1"/>
    <property type="molecule type" value="mRNA"/>
</dbReference>
<dbReference type="EMBL" id="AY505120">
    <property type="protein sequence ID" value="AAS86435.1"/>
    <property type="molecule type" value="mRNA"/>
</dbReference>
<dbReference type="EMBL" id="AY505121">
    <property type="protein sequence ID" value="AAS86436.1"/>
    <property type="molecule type" value="mRNA"/>
</dbReference>
<dbReference type="EMBL" id="AY505122">
    <property type="protein sequence ID" value="AAS86437.1"/>
    <property type="molecule type" value="mRNA"/>
</dbReference>
<dbReference type="EMBL" id="AB028949">
    <property type="protein sequence ID" value="BAA82978.1"/>
    <property type="status" value="ALT_INIT"/>
    <property type="molecule type" value="mRNA"/>
</dbReference>
<dbReference type="EMBL" id="AL034395">
    <property type="status" value="NOT_ANNOTATED_CDS"/>
    <property type="molecule type" value="Genomic_DNA"/>
</dbReference>
<dbReference type="EMBL" id="AL035405">
    <property type="status" value="NOT_ANNOTATED_CDS"/>
    <property type="molecule type" value="Genomic_DNA"/>
</dbReference>
<dbReference type="EMBL" id="AL391215">
    <property type="status" value="NOT_ANNOTATED_CDS"/>
    <property type="molecule type" value="Genomic_DNA"/>
</dbReference>
<dbReference type="EMBL" id="CH471167">
    <property type="protein sequence ID" value="EAW51704.1"/>
    <property type="molecule type" value="Genomic_DNA"/>
</dbReference>
<dbReference type="EMBL" id="BC035501">
    <property type="protein sequence ID" value="AAH35501.3"/>
    <property type="molecule type" value="mRNA"/>
</dbReference>
<dbReference type="EMBL" id="BC036877">
    <property type="protein sequence ID" value="AAH36877.1"/>
    <property type="status" value="ALT_SEQ"/>
    <property type="molecule type" value="mRNA"/>
</dbReference>
<dbReference type="EMBL" id="BC101637">
    <property type="protein sequence ID" value="AAI01638.1"/>
    <property type="status" value="ALT_INIT"/>
    <property type="molecule type" value="mRNA"/>
</dbReference>
<dbReference type="EMBL" id="BC113621">
    <property type="protein sequence ID" value="AAI13622.1"/>
    <property type="status" value="ALT_INIT"/>
    <property type="molecule type" value="mRNA"/>
</dbReference>
<dbReference type="EMBL" id="AB015329">
    <property type="protein sequence ID" value="BAA88115.1"/>
    <property type="status" value="ALT_FRAME"/>
    <property type="molecule type" value="mRNA"/>
</dbReference>
<dbReference type="EMBL" id="AK125794">
    <property type="protein sequence ID" value="BAC86294.1"/>
    <property type="status" value="ALT_INIT"/>
    <property type="molecule type" value="mRNA"/>
</dbReference>
<dbReference type="CCDS" id="CCDS152.2">
    <molecule id="Q674X7-1"/>
</dbReference>
<dbReference type="CCDS" id="CCDS30604.1">
    <molecule id="Q674X7-3"/>
</dbReference>
<dbReference type="CCDS" id="CCDS41267.1">
    <molecule id="Q674X7-2"/>
</dbReference>
<dbReference type="CCDS" id="CCDS41268.1">
    <molecule id="Q674X7-4"/>
</dbReference>
<dbReference type="RefSeq" id="NP_001017999.1">
    <molecule id="Q674X7-4"/>
    <property type="nucleotide sequence ID" value="NM_001017999.3"/>
</dbReference>
<dbReference type="RefSeq" id="NP_001018000.1">
    <molecule id="Q674X7-3"/>
    <property type="nucleotide sequence ID" value="NM_001018000.4"/>
</dbReference>
<dbReference type="RefSeq" id="NP_001018001.1">
    <molecule id="Q674X7-4"/>
    <property type="nucleotide sequence ID" value="NM_001018001.3"/>
</dbReference>
<dbReference type="RefSeq" id="NP_001357160.2">
    <molecule id="Q674X7-4"/>
    <property type="nucleotide sequence ID" value="NM_001370231.2"/>
</dbReference>
<dbReference type="RefSeq" id="NP_056024.1">
    <molecule id="Q674X7-2"/>
    <property type="nucleotide sequence ID" value="NM_015209.3"/>
</dbReference>
<dbReference type="RefSeq" id="NP_963922.2">
    <molecule id="Q674X7-1"/>
    <property type="nucleotide sequence ID" value="NM_201628.3"/>
</dbReference>
<dbReference type="RefSeq" id="XP_016856260.1">
    <molecule id="Q674X7-2"/>
    <property type="nucleotide sequence ID" value="XM_017000771.2"/>
</dbReference>
<dbReference type="RefSeq" id="XP_054191388.1">
    <molecule id="Q674X7-2"/>
    <property type="nucleotide sequence ID" value="XM_054335413.1"/>
</dbReference>
<dbReference type="SMR" id="Q674X7"/>
<dbReference type="BioGRID" id="116858">
    <property type="interactions" value="31"/>
</dbReference>
<dbReference type="FunCoup" id="Q674X7">
    <property type="interactions" value="1322"/>
</dbReference>
<dbReference type="IntAct" id="Q674X7">
    <property type="interactions" value="19"/>
</dbReference>
<dbReference type="MINT" id="Q674X7"/>
<dbReference type="STRING" id="9606.ENSP00000365198"/>
<dbReference type="GlyCosmos" id="Q674X7">
    <property type="glycosylation" value="2 sites, 1 glycan"/>
</dbReference>
<dbReference type="GlyGen" id="Q674X7">
    <property type="glycosylation" value="3 sites, 1 O-linked glycan (3 sites)"/>
</dbReference>
<dbReference type="iPTMnet" id="Q674X7"/>
<dbReference type="PhosphoSitePlus" id="Q674X7"/>
<dbReference type="BioMuta" id="HGNC:32336"/>
<dbReference type="BioMuta" id="KAZN"/>
<dbReference type="DMDM" id="172044653"/>
<dbReference type="jPOST" id="Q674X7"/>
<dbReference type="MassIVE" id="Q674X7"/>
<dbReference type="PaxDb" id="9606-ENSP00000365198"/>
<dbReference type="PeptideAtlas" id="Q674X7"/>
<dbReference type="ProteomicsDB" id="3001"/>
<dbReference type="ProteomicsDB" id="65976">
    <molecule id="Q674X7-1"/>
</dbReference>
<dbReference type="ProteomicsDB" id="65977">
    <molecule id="Q674X7-2"/>
</dbReference>
<dbReference type="ProteomicsDB" id="65978">
    <molecule id="Q674X7-3"/>
</dbReference>
<dbReference type="ProteomicsDB" id="65979">
    <molecule id="Q674X7-4"/>
</dbReference>
<dbReference type="ProteomicsDB" id="65980">
    <molecule id="Q674X7-5"/>
</dbReference>
<dbReference type="Pumba" id="Q674X7"/>
<dbReference type="Antibodypedia" id="28740">
    <property type="antibodies" value="103 antibodies from 20 providers"/>
</dbReference>
<dbReference type="DNASU" id="23254"/>
<dbReference type="Ensembl" id="ENST00000361144.9">
    <molecule id="Q674X7-3"/>
    <property type="protein sequence ID" value="ENSP00000354727.5"/>
    <property type="gene ID" value="ENSG00000189337.17"/>
</dbReference>
<dbReference type="Ensembl" id="ENST00000376030.7">
    <molecule id="Q674X7-1"/>
    <property type="protein sequence ID" value="ENSP00000365198.2"/>
    <property type="gene ID" value="ENSG00000189337.17"/>
</dbReference>
<dbReference type="Ensembl" id="ENST00000400797.3">
    <molecule id="Q674X7-4"/>
    <property type="protein sequence ID" value="ENSP00000383601.3"/>
    <property type="gene ID" value="ENSG00000189337.17"/>
</dbReference>
<dbReference type="Ensembl" id="ENST00000400798.6">
    <molecule id="Q674X7-4"/>
    <property type="protein sequence ID" value="ENSP00000383602.2"/>
    <property type="gene ID" value="ENSG00000189337.17"/>
</dbReference>
<dbReference type="Ensembl" id="ENST00000503743.5">
    <molecule id="Q674X7-2"/>
    <property type="protein sequence ID" value="ENSP00000426015.1"/>
    <property type="gene ID" value="ENSG00000189337.17"/>
</dbReference>
<dbReference type="GeneID" id="23254"/>
<dbReference type="KEGG" id="hsa:23254"/>
<dbReference type="MANE-Select" id="ENST00000376030.7">
    <property type="protein sequence ID" value="ENSP00000365198.2"/>
    <property type="RefSeq nucleotide sequence ID" value="NM_201628.3"/>
    <property type="RefSeq protein sequence ID" value="NP_963922.2"/>
</dbReference>
<dbReference type="UCSC" id="uc001avm.5">
    <molecule id="Q674X7-1"/>
    <property type="organism name" value="human"/>
</dbReference>
<dbReference type="AGR" id="HGNC:29173"/>
<dbReference type="CTD" id="23254"/>
<dbReference type="DisGeNET" id="23254"/>
<dbReference type="GeneCards" id="KAZN"/>
<dbReference type="HGNC" id="HGNC:29173">
    <property type="gene designation" value="KAZN"/>
</dbReference>
<dbReference type="HPA" id="ENSG00000189337">
    <property type="expression patterns" value="Tissue enhanced (brain, lymphoid tissue)"/>
</dbReference>
<dbReference type="MIM" id="618301">
    <property type="type" value="gene"/>
</dbReference>
<dbReference type="neXtProt" id="NX_Q674X7"/>
<dbReference type="OpenTargets" id="ENSG00000189337"/>
<dbReference type="VEuPathDB" id="HostDB:ENSG00000189337"/>
<dbReference type="eggNOG" id="KOG0249">
    <property type="taxonomic scope" value="Eukaryota"/>
</dbReference>
<dbReference type="GeneTree" id="ENSGT00940000154570"/>
<dbReference type="HOGENOM" id="CLU_010768_2_0_1"/>
<dbReference type="InParanoid" id="Q674X7"/>
<dbReference type="OrthoDB" id="6430345at2759"/>
<dbReference type="PAN-GO" id="Q674X7">
    <property type="GO annotations" value="0 GO annotations based on evolutionary models"/>
</dbReference>
<dbReference type="PhylomeDB" id="Q674X7"/>
<dbReference type="TreeFam" id="TF331216"/>
<dbReference type="TreeFam" id="TF343181"/>
<dbReference type="PathwayCommons" id="Q674X7"/>
<dbReference type="Reactome" id="R-HSA-6809371">
    <property type="pathway name" value="Formation of the cornified envelope"/>
</dbReference>
<dbReference type="SignaLink" id="Q674X7"/>
<dbReference type="BioGRID-ORCS" id="23254">
    <property type="hits" value="11 hits in 1157 CRISPR screens"/>
</dbReference>
<dbReference type="CD-CODE" id="B5B9A610">
    <property type="entry name" value="PML body"/>
</dbReference>
<dbReference type="ChiTaRS" id="KAZN">
    <property type="organism name" value="human"/>
</dbReference>
<dbReference type="GenomeRNAi" id="23254"/>
<dbReference type="Pharos" id="Q674X7">
    <property type="development level" value="Tbio"/>
</dbReference>
<dbReference type="PRO" id="PR:Q674X7"/>
<dbReference type="Proteomes" id="UP000005640">
    <property type="component" value="Chromosome 1"/>
</dbReference>
<dbReference type="RNAct" id="Q674X7">
    <property type="molecule type" value="protein"/>
</dbReference>
<dbReference type="Bgee" id="ENSG00000189337">
    <property type="expression patterns" value="Expressed in cerebellar vermis and 199 other cell types or tissues"/>
</dbReference>
<dbReference type="ExpressionAtlas" id="Q674X7">
    <property type="expression patterns" value="baseline and differential"/>
</dbReference>
<dbReference type="GO" id="GO:0001533">
    <property type="term" value="C:cornified envelope"/>
    <property type="evidence" value="ECO:0000314"/>
    <property type="project" value="MGI"/>
</dbReference>
<dbReference type="GO" id="GO:0005856">
    <property type="term" value="C:cytoskeleton"/>
    <property type="evidence" value="ECO:0007669"/>
    <property type="project" value="UniProtKB-SubCell"/>
</dbReference>
<dbReference type="GO" id="GO:0005829">
    <property type="term" value="C:cytosol"/>
    <property type="evidence" value="ECO:0000314"/>
    <property type="project" value="HPA"/>
</dbReference>
<dbReference type="GO" id="GO:0030057">
    <property type="term" value="C:desmosome"/>
    <property type="evidence" value="ECO:0000314"/>
    <property type="project" value="MGI"/>
</dbReference>
<dbReference type="GO" id="GO:0016607">
    <property type="term" value="C:nuclear speck"/>
    <property type="evidence" value="ECO:0000314"/>
    <property type="project" value="HPA"/>
</dbReference>
<dbReference type="GO" id="GO:0005654">
    <property type="term" value="C:nucleoplasm"/>
    <property type="evidence" value="ECO:0000314"/>
    <property type="project" value="HPA"/>
</dbReference>
<dbReference type="GO" id="GO:0031424">
    <property type="term" value="P:keratinization"/>
    <property type="evidence" value="ECO:0007669"/>
    <property type="project" value="UniProtKB-KW"/>
</dbReference>
<dbReference type="CDD" id="cd09564">
    <property type="entry name" value="SAM_kazrin_repeat1"/>
    <property type="match status" value="1"/>
</dbReference>
<dbReference type="CDD" id="cd09567">
    <property type="entry name" value="SAM_kazrin_repeat2"/>
    <property type="match status" value="1"/>
</dbReference>
<dbReference type="CDD" id="cd09570">
    <property type="entry name" value="SAM_kazrin_repeat3"/>
    <property type="match status" value="1"/>
</dbReference>
<dbReference type="FunFam" id="1.10.150.50:FF:000048">
    <property type="entry name" value="kazrin isoform X1"/>
    <property type="match status" value="1"/>
</dbReference>
<dbReference type="FunFam" id="1.10.150.50:FF:000005">
    <property type="entry name" value="Liprin-beta-1 isoform 1"/>
    <property type="match status" value="1"/>
</dbReference>
<dbReference type="FunFam" id="1.10.150.50:FF:000007">
    <property type="entry name" value="Liprin-beta-1 isoform 1"/>
    <property type="match status" value="1"/>
</dbReference>
<dbReference type="Gene3D" id="1.10.150.50">
    <property type="entry name" value="Transcription Factor, Ets-1"/>
    <property type="match status" value="3"/>
</dbReference>
<dbReference type="InterPro" id="IPR037614">
    <property type="entry name" value="Kazrin"/>
</dbReference>
<dbReference type="InterPro" id="IPR037613">
    <property type="entry name" value="Kazrin_SAM_rpt_1"/>
</dbReference>
<dbReference type="InterPro" id="IPR037615">
    <property type="entry name" value="Kazrin_SAM_rpt_2"/>
</dbReference>
<dbReference type="InterPro" id="IPR037616">
    <property type="entry name" value="Kazrin_SAM_rpt_3"/>
</dbReference>
<dbReference type="InterPro" id="IPR001660">
    <property type="entry name" value="SAM"/>
</dbReference>
<dbReference type="InterPro" id="IPR013761">
    <property type="entry name" value="SAM/pointed_sf"/>
</dbReference>
<dbReference type="PANTHER" id="PTHR12776:SF1">
    <property type="entry name" value="KAZRIN"/>
    <property type="match status" value="1"/>
</dbReference>
<dbReference type="PANTHER" id="PTHR12776">
    <property type="entry name" value="KAZRIN-RELATED"/>
    <property type="match status" value="1"/>
</dbReference>
<dbReference type="Pfam" id="PF00536">
    <property type="entry name" value="SAM_1"/>
    <property type="match status" value="2"/>
</dbReference>
<dbReference type="Pfam" id="PF07647">
    <property type="entry name" value="SAM_2"/>
    <property type="match status" value="1"/>
</dbReference>
<dbReference type="SMART" id="SM00454">
    <property type="entry name" value="SAM"/>
    <property type="match status" value="3"/>
</dbReference>
<dbReference type="SUPFAM" id="SSF47769">
    <property type="entry name" value="SAM/Pointed domain"/>
    <property type="match status" value="3"/>
</dbReference>
<dbReference type="PROSITE" id="PS50105">
    <property type="entry name" value="SAM_DOMAIN"/>
    <property type="match status" value="3"/>
</dbReference>
<evidence type="ECO:0000250" key="1"/>
<evidence type="ECO:0000250" key="2">
    <source>
        <dbReference type="UniProtKB" id="Q69ZS8"/>
    </source>
</evidence>
<evidence type="ECO:0000255" key="3"/>
<evidence type="ECO:0000255" key="4">
    <source>
        <dbReference type="PROSITE-ProRule" id="PRU00184"/>
    </source>
</evidence>
<evidence type="ECO:0000256" key="5">
    <source>
        <dbReference type="SAM" id="MobiDB-lite"/>
    </source>
</evidence>
<evidence type="ECO:0000269" key="6">
    <source>
    </source>
</evidence>
<evidence type="ECO:0000269" key="7">
    <source>
    </source>
</evidence>
<evidence type="ECO:0000303" key="8">
    <source>
    </source>
</evidence>
<evidence type="ECO:0000303" key="9">
    <source>
    </source>
</evidence>
<evidence type="ECO:0000303" key="10">
    <source>
    </source>
</evidence>
<evidence type="ECO:0000303" key="11">
    <source>
    </source>
</evidence>
<evidence type="ECO:0000305" key="12"/>
<evidence type="ECO:0000312" key="13">
    <source>
        <dbReference type="HGNC" id="HGNC:29173"/>
    </source>
</evidence>
<evidence type="ECO:0007744" key="14">
    <source>
    </source>
</evidence>
<keyword id="KW-0025">Alternative splicing</keyword>
<keyword id="KW-0965">Cell junction</keyword>
<keyword id="KW-0175">Coiled coil</keyword>
<keyword id="KW-0963">Cytoplasm</keyword>
<keyword id="KW-0206">Cytoskeleton</keyword>
<keyword id="KW-0417">Keratinization</keyword>
<keyword id="KW-0539">Nucleus</keyword>
<keyword id="KW-0597">Phosphoprotein</keyword>
<keyword id="KW-1267">Proteomics identification</keyword>
<keyword id="KW-1185">Reference proteome</keyword>
<keyword id="KW-0677">Repeat</keyword>
<proteinExistence type="evidence at protein level"/>
<organism>
    <name type="scientific">Homo sapiens</name>
    <name type="common">Human</name>
    <dbReference type="NCBI Taxonomy" id="9606"/>
    <lineage>
        <taxon>Eukaryota</taxon>
        <taxon>Metazoa</taxon>
        <taxon>Chordata</taxon>
        <taxon>Craniata</taxon>
        <taxon>Vertebrata</taxon>
        <taxon>Euteleostomi</taxon>
        <taxon>Mammalia</taxon>
        <taxon>Eutheria</taxon>
        <taxon>Euarchontoglires</taxon>
        <taxon>Primates</taxon>
        <taxon>Haplorrhini</taxon>
        <taxon>Catarrhini</taxon>
        <taxon>Hominidae</taxon>
        <taxon>Homo</taxon>
    </lineage>
</organism>
<comment type="function">
    <text evidence="7">Component of the cornified envelope of keratinocytes. May be involved in the interplay between adherens junctions and desmosomes. The function in the nucleus is not known.</text>
</comment>
<comment type="subunit">
    <text>Isoform 2, isoform 3 and isoform 4 interact with PPL N-terminus.</text>
</comment>
<comment type="interaction">
    <interactant intactId="EBI-949239">
        <id>Q674X7</id>
    </interactant>
    <interactant intactId="EBI-713291">
        <id>P51114</id>
        <label>FXR1</label>
    </interactant>
    <organismsDiffer>false</organismsDiffer>
    <experiments>2</experiments>
</comment>
<comment type="interaction">
    <interactant intactId="EBI-949239">
        <id>Q674X7</id>
    </interactant>
    <interactant intactId="EBI-741037">
        <id>Q9BRK4</id>
        <label>LZTS2</label>
    </interactant>
    <organismsDiffer>false</organismsDiffer>
    <experiments>3</experiments>
</comment>
<comment type="interaction">
    <interactant intactId="EBI-949239">
        <id>Q674X7</id>
    </interactant>
    <interactant intactId="EBI-1047085">
        <id>Q92574</id>
        <label>TSC1</label>
    </interactant>
    <organismsDiffer>false</organismsDiffer>
    <experiments>2</experiments>
</comment>
<comment type="interaction">
    <interactant intactId="EBI-12024294">
        <id>Q674X7-2</id>
    </interactant>
    <interactant intactId="EBI-948603">
        <id>Q03989</id>
        <label>ARID5A</label>
    </interactant>
    <organismsDiffer>false</organismsDiffer>
    <experiments>3</experiments>
</comment>
<comment type="interaction">
    <interactant intactId="EBI-12024294">
        <id>Q674X7-2</id>
    </interactant>
    <interactant intactId="EBI-12357161">
        <id>Q5SYC1</id>
        <label>CLVS2</label>
    </interactant>
    <organismsDiffer>false</organismsDiffer>
    <experiments>3</experiments>
</comment>
<comment type="interaction">
    <interactant intactId="EBI-12024294">
        <id>Q674X7-2</id>
    </interactant>
    <interactant intactId="EBI-739789">
        <id>Q92997</id>
        <label>DVL3</label>
    </interactant>
    <organismsDiffer>false</organismsDiffer>
    <experiments>3</experiments>
</comment>
<comment type="interaction">
    <interactant intactId="EBI-12024294">
        <id>Q674X7-2</id>
    </interactant>
    <interactant intactId="EBI-11959475">
        <id>P25791-3</id>
        <label>LMO2</label>
    </interactant>
    <organismsDiffer>false</organismsDiffer>
    <experiments>3</experiments>
</comment>
<comment type="interaction">
    <interactant intactId="EBI-12024294">
        <id>Q674X7-2</id>
    </interactant>
    <interactant intactId="EBI-1216080">
        <id>Q9Y250</id>
        <label>LZTS1</label>
    </interactant>
    <organismsDiffer>false</organismsDiffer>
    <experiments>3</experiments>
</comment>
<comment type="interaction">
    <interactant intactId="EBI-12024294">
        <id>Q674X7-2</id>
    </interactant>
    <interactant intactId="EBI-359352">
        <id>P25786</id>
        <label>PSMA1</label>
    </interactant>
    <organismsDiffer>false</organismsDiffer>
    <experiments>6</experiments>
</comment>
<comment type="interaction">
    <interactant intactId="EBI-12024294">
        <id>Q674X7-2</id>
    </interactant>
    <interactant intactId="EBI-7543499">
        <id>Q8IZW8</id>
        <label>TNS4</label>
    </interactant>
    <organismsDiffer>false</organismsDiffer>
    <experiments>3</experiments>
</comment>
<comment type="interaction">
    <interactant intactId="EBI-12024294">
        <id>Q674X7-2</id>
    </interactant>
    <interactant intactId="EBI-2932492">
        <id>Q99757</id>
        <label>TXN2</label>
    </interactant>
    <organismsDiffer>false</organismsDiffer>
    <experiments>3</experiments>
</comment>
<comment type="interaction">
    <interactant intactId="EBI-12024294">
        <id>Q674X7-2</id>
    </interactant>
    <interactant intactId="EBI-743272">
        <id>O75604</id>
        <label>USP2</label>
    </interactant>
    <organismsDiffer>false</organismsDiffer>
    <experiments>3</experiments>
</comment>
<comment type="subcellular location">
    <subcellularLocation>
        <location evidence="1">Cytoplasm</location>
        <location evidence="1">Cytoskeleton</location>
    </subcellularLocation>
</comment>
<comment type="subcellular location">
    <molecule>Isoform 2</molecule>
    <subcellularLocation>
        <location>Cytoplasm</location>
    </subcellularLocation>
    <subcellularLocation>
        <location>Cell junction</location>
        <location>Desmosome</location>
    </subcellularLocation>
    <subcellularLocation>
        <location>Nucleus</location>
    </subcellularLocation>
    <text>Observed at the apical plasma membrane of keratinocytes. Partially colocalizes with PPL and DP at desmosomes, and with PP at the interdesmosomal plasma membrane. Colocalizes with cortical actin-based membrane structures.</text>
</comment>
<comment type="subcellular location">
    <molecule>Isoform 3</molecule>
    <subcellularLocation>
        <location>Cytoplasm</location>
    </subcellularLocation>
    <subcellularLocation>
        <location>Cell junction</location>
        <location>Desmosome</location>
    </subcellularLocation>
    <subcellularLocation>
        <location>Nucleus</location>
    </subcellularLocation>
    <text>Observed at the apical plasma membrane of keratinocytes. Partially colocalizes with PPL and DP at desmosomes, and with PP at the interdesmosomal plasma membrane. Colocalizes with cortical actin-based membrane structures.</text>
</comment>
<comment type="subcellular location">
    <molecule>Isoform 4</molecule>
    <subcellularLocation>
        <location>Cytoplasm</location>
    </subcellularLocation>
    <subcellularLocation>
        <location>Cell junction</location>
        <location>Desmosome</location>
    </subcellularLocation>
    <subcellularLocation>
        <location>Nucleus</location>
    </subcellularLocation>
    <text>Observed at the apical plasma membrane of keratinocytes. Partially colocalizes with PPL and DP at desmosomes, and with PP at the interdesmosomal plasma membrane. Colocalizes with cortical actin-based membrane structures.</text>
</comment>
<comment type="alternative products">
    <event type="alternative splicing"/>
    <isoform>
        <id>Q674X7-1</id>
        <name>1</name>
        <sequence type="displayed"/>
    </isoform>
    <isoform>
        <id>Q674X7-2</id>
        <name>2</name>
        <name>A</name>
        <sequence type="described" ref="VSP_031901 VSP_031903"/>
    </isoform>
    <isoform>
        <id>Q674X7-3</id>
        <name>3</name>
        <name>B</name>
        <sequence type="described" ref="VSP_031899 VSP_031901 VSP_031903"/>
    </isoform>
    <isoform>
        <id>Q674X7-4</id>
        <name>4</name>
        <name>C</name>
        <name>D</name>
        <sequence type="described" ref="VSP_031898 VSP_031901 VSP_031903"/>
    </isoform>
    <isoform>
        <id>Q674X7-5</id>
        <name>5</name>
        <sequence type="described" ref="VSP_031900 VSP_031902"/>
    </isoform>
</comment>
<comment type="tissue specificity">
    <text evidence="7">Isoform 2, isoform 3 and isoform 4 are expressed in several cell lines including keratinocytes and bladder and epidermoid carcinoma (at protein level). Isoform 2, isoform 3 and isoform 4 are expressed in hair follicle and interfollicular epidermis (at protein level).</text>
</comment>
<comment type="similarity">
    <text evidence="12">Belongs to the kazrin family.</text>
</comment>
<comment type="sequence caution" evidence="12">
    <conflict type="miscellaneous discrepancy">
        <sequence resource="EMBL-CDS" id="AAH36877"/>
    </conflict>
    <text>The cDNA sequence has been translated in the reverse direction.</text>
</comment>
<comment type="sequence caution" evidence="12">
    <conflict type="erroneous initiation">
        <sequence resource="EMBL-CDS" id="AAI01638"/>
    </conflict>
</comment>
<comment type="sequence caution" evidence="12">
    <conflict type="erroneous initiation">
        <sequence resource="EMBL-CDS" id="AAI13622"/>
    </conflict>
</comment>
<comment type="sequence caution" evidence="12">
    <conflict type="erroneous initiation">
        <sequence resource="EMBL-CDS" id="BAA82978"/>
    </conflict>
</comment>
<comment type="sequence caution" evidence="12">
    <conflict type="frameshift">
        <sequence resource="EMBL-CDS" id="BAA88115"/>
    </conflict>
</comment>
<comment type="sequence caution" evidence="12">
    <conflict type="erroneous initiation">
        <sequence resource="EMBL-CDS" id="BAC86294"/>
    </conflict>
</comment>
<sequence>MMEDNKQLALRIDGAVQSASQEVTNLRAELTATNRRLAELSGGGGPGPGPGAAASASAAGDSAATNMENPQLGAQVLLREEVSRLQEEVHLLRQMKEMLAKDLEESQGGKSSEVLSATELRVQLAQKEQELARAKEALQAMKADRKRLKGEKTDLVSQMQQLYATLESREEQLRDFIRNYEQHRKESEDAVKALAKEKDLLEREKWELRRQAKEATDHATALRSQLDLKDNRMKELEAELAMAKQSLATLTKDVPKRHSLAMPGETVLNGNQEWVVQADLPLTAAIRQSQQTLYHSHPPHPADRQAVRVSPCHSRQPSVISDASAAEGDRSSTPSDINSPRHRTHSLCNGDSPGPVQKNLHNPIVQSLEDLEDQKRKKKKEKMGFGSISRVFARGKQRKSLDPGLFDDSDSQCSPTRQSLSLSEGEEQMDRLQQVELVRTTPMSHWKAGTVQAWLEVVMAMPMYVKACTENVKSGKVLLSLSDEDLQLGLGVCSSLHRRKLRLAIEDYRDAEAGRSLSKAAELDHHWVAKAWLNDIGLSQYSQAFQNHLVDGRMLNSLMKRDLEKHLNVSKKFHQVSILLGIELLYQVNFSREALQERRARCETQNIDPVVWTNQRVLKWVRDIDLKEYADNLTNSGVHGAVLVLEPTFNAEAMATALGIPSGKHILRRHLAEEMSAVFHPANSTGIREAERFGTPPGRASSVTRAGKEENSSGLKYKAGRLPLGKIGRGFSSKDPDFHDDYGSLQNEDCGDDDPQSRLEQCRLEGYNSLEVTNV</sequence>
<gene>
    <name evidence="13" type="primary">KAZN</name>
    <name evidence="13" type="synonym">C1orf196</name>
    <name type="synonym">KAZ</name>
    <name type="synonym">KIAA1026</name>
    <name type="ORF">HRIHFB2003</name>
</gene>
<name>KAZRN_HUMAN</name>
<feature type="chain" id="PRO_0000322453" description="Kazrin">
    <location>
        <begin position="1"/>
        <end position="775"/>
    </location>
</feature>
<feature type="domain" description="SAM 1" evidence="4">
    <location>
        <begin position="446"/>
        <end position="511"/>
    </location>
</feature>
<feature type="domain" description="SAM 2" evidence="4">
    <location>
        <begin position="524"/>
        <end position="588"/>
    </location>
</feature>
<feature type="domain" description="SAM 3" evidence="4">
    <location>
        <begin position="612"/>
        <end position="679"/>
    </location>
</feature>
<feature type="region of interest" description="Disordered" evidence="5">
    <location>
        <begin position="38"/>
        <end position="66"/>
    </location>
</feature>
<feature type="region of interest" description="Interaction with PPL" evidence="7">
    <location>
        <begin position="174"/>
        <end position="333"/>
    </location>
</feature>
<feature type="region of interest" description="Disordered" evidence="5">
    <location>
        <begin position="290"/>
        <end position="427"/>
    </location>
</feature>
<feature type="region of interest" description="Disordered" evidence="5">
    <location>
        <begin position="688"/>
        <end position="715"/>
    </location>
</feature>
<feature type="region of interest" description="Disordered" evidence="5">
    <location>
        <begin position="729"/>
        <end position="762"/>
    </location>
</feature>
<feature type="coiled-coil region" evidence="3">
    <location>
        <begin position="74"/>
        <end position="256"/>
    </location>
</feature>
<feature type="compositionally biased region" description="Low complexity" evidence="5">
    <location>
        <begin position="51"/>
        <end position="64"/>
    </location>
</feature>
<feature type="compositionally biased region" description="Polar residues" evidence="5">
    <location>
        <begin position="411"/>
        <end position="422"/>
    </location>
</feature>
<feature type="compositionally biased region" description="Basic and acidic residues" evidence="5">
    <location>
        <begin position="732"/>
        <end position="742"/>
    </location>
</feature>
<feature type="modified residue" description="Phosphoserine" evidence="14">
    <location>
        <position position="352"/>
    </location>
</feature>
<feature type="modified residue" description="Phosphoserine" evidence="2">
    <location>
        <position position="367"/>
    </location>
</feature>
<feature type="modified residue" description="Phosphoserine" evidence="14">
    <location>
        <position position="387"/>
    </location>
</feature>
<feature type="splice variant" id="VSP_031898" description="In isoform 4." evidence="9 11">
    <location>
        <begin position="1"/>
        <end position="94"/>
    </location>
</feature>
<feature type="splice variant" id="VSP_031899" description="In isoform 3." evidence="9 10">
    <original>MMEDNKQLALRIDGAVQSASQEVTNLRAELTATNRRLAELSGGGGPGPGPGAAASASAAGDSAATNMENPQLGAQ</original>
    <variation>MRAADSGSWERVRQLAAQGEPAPSCGAGAGPARPPGPAACEQCVDAAGPGDRPRAGVPRVRADGDCSQP</variation>
    <location>
        <begin position="1"/>
        <end position="75"/>
    </location>
</feature>
<feature type="splice variant" id="VSP_031900" description="In isoform 5." evidence="8">
    <original>GDSPGPVQKNLHNPIVQSLEDLEDQKRKKKKEKMGFGSISRVFARGKQRKSLDPGLFDDSDSQCSPTRQSLS</original>
    <variation>VRPAAAGPGPLGPAQKLQGRGWRGEAILAVSSRPPREHSGECISCSVLSFCKKRWMWGEKGMRPVCSLCPGG</variation>
    <location>
        <begin position="350"/>
        <end position="421"/>
    </location>
</feature>
<feature type="splice variant" id="VSP_031901" description="In isoform 2, isoform 3 and isoform 4." evidence="9 10 11">
    <original>DSDSQCSPTRQSLSL</original>
    <variation>GTAPDYYIEEDADW</variation>
    <location>
        <begin position="408"/>
        <end position="422"/>
    </location>
</feature>
<feature type="splice variant" id="VSP_031902" description="In isoform 5." evidence="8">
    <location>
        <begin position="422"/>
        <end position="775"/>
    </location>
</feature>
<feature type="splice variant" id="VSP_031903" description="In isoform 2, isoform 3 and isoform 4." evidence="9 10 11">
    <location>
        <begin position="423"/>
        <end position="775"/>
    </location>
</feature>
<feature type="sequence variant" id="VAR_060168" description="In dbSNP:rs10803354." evidence="6">
    <original>A</original>
    <variation>T</variation>
    <location>
        <position position="706"/>
    </location>
</feature>
<feature type="sequence variant" id="VAR_060169" description="In dbSNP:rs12048768.">
    <original>R</original>
    <variation>C</variation>
    <location>
        <position position="763"/>
    </location>
</feature>
<feature type="sequence conflict" description="In Ref. 6; BAA88115." evidence="12" ref="6">
    <original>CN</original>
    <variation>S</variation>
    <location>
        <begin position="348"/>
        <end position="349"/>
    </location>
</feature>
<protein>
    <recommendedName>
        <fullName>Kazrin</fullName>
    </recommendedName>
</protein>
<accession>Q674X7</accession>
<accession>B0QYQ0</accession>
<accession>B1AJZ1</accession>
<accession>B1AK78</accession>
<accession>Q5TGF1</accession>
<accession>Q674X4</accession>
<accession>Q674X6</accession>
<accession>Q6ZUD1</accession>
<accession>Q8IYN7</accession>
<accession>Q8N409</accession>
<accession>Q9UIL2</accession>
<accession>Q9UPX4</accession>